<comment type="function">
    <text evidence="1">Catalyzes the methylthiolation of an aspartic acid residue of ribosomal protein uS12.</text>
</comment>
<comment type="catalytic activity">
    <reaction evidence="1">
        <text>L-aspartate(89)-[ribosomal protein uS12]-hydrogen + (sulfur carrier)-SH + AH2 + 2 S-adenosyl-L-methionine = 3-methylsulfanyl-L-aspartate(89)-[ribosomal protein uS12]-hydrogen + (sulfur carrier)-H + 5'-deoxyadenosine + L-methionine + A + S-adenosyl-L-homocysteine + 2 H(+)</text>
        <dbReference type="Rhea" id="RHEA:37087"/>
        <dbReference type="Rhea" id="RHEA-COMP:10460"/>
        <dbReference type="Rhea" id="RHEA-COMP:10461"/>
        <dbReference type="Rhea" id="RHEA-COMP:14737"/>
        <dbReference type="Rhea" id="RHEA-COMP:14739"/>
        <dbReference type="ChEBI" id="CHEBI:13193"/>
        <dbReference type="ChEBI" id="CHEBI:15378"/>
        <dbReference type="ChEBI" id="CHEBI:17319"/>
        <dbReference type="ChEBI" id="CHEBI:17499"/>
        <dbReference type="ChEBI" id="CHEBI:29917"/>
        <dbReference type="ChEBI" id="CHEBI:29961"/>
        <dbReference type="ChEBI" id="CHEBI:57844"/>
        <dbReference type="ChEBI" id="CHEBI:57856"/>
        <dbReference type="ChEBI" id="CHEBI:59789"/>
        <dbReference type="ChEBI" id="CHEBI:64428"/>
        <dbReference type="ChEBI" id="CHEBI:73599"/>
        <dbReference type="EC" id="2.8.4.4"/>
    </reaction>
</comment>
<comment type="cofactor">
    <cofactor evidence="1">
        <name>[4Fe-4S] cluster</name>
        <dbReference type="ChEBI" id="CHEBI:49883"/>
    </cofactor>
    <text evidence="1">Binds 2 [4Fe-4S] clusters. One cluster is coordinated with 3 cysteines and an exchangeable S-adenosyl-L-methionine.</text>
</comment>
<comment type="subcellular location">
    <subcellularLocation>
        <location evidence="1">Cytoplasm</location>
    </subcellularLocation>
</comment>
<comment type="similarity">
    <text evidence="1">Belongs to the methylthiotransferase family. RimO subfamily.</text>
</comment>
<evidence type="ECO:0000255" key="1">
    <source>
        <dbReference type="HAMAP-Rule" id="MF_01865"/>
    </source>
</evidence>
<evidence type="ECO:0000255" key="2">
    <source>
        <dbReference type="PROSITE-ProRule" id="PRU01266"/>
    </source>
</evidence>
<protein>
    <recommendedName>
        <fullName evidence="1">Ribosomal protein uS12 methylthiotransferase RimO</fullName>
        <shortName evidence="1">uS12 MTTase</shortName>
        <shortName evidence="1">uS12 methylthiotransferase</shortName>
        <ecNumber evidence="1">2.8.4.4</ecNumber>
    </recommendedName>
    <alternativeName>
        <fullName evidence="1">Ribosomal protein uS12 (aspartate-C(3))-methylthiotransferase</fullName>
    </alternativeName>
    <alternativeName>
        <fullName evidence="1">Ribosome maturation factor RimO</fullName>
    </alternativeName>
</protein>
<gene>
    <name evidence="1" type="primary">rimO</name>
    <name type="ordered locus">Daud_0839</name>
</gene>
<sequence>MNSPWKAEASRIALVSLGCDKNRVDGEVMLGLLERAGYQITAELEADIILVNTCAFIQDAKQESIEAILETARYRGNGRCRVLLATGCLAQRYPDELLRDIPELDGVVGTGEVGRVVDIVRRAATGERVREVGPPGFLGREVLPRVPSGSPFTAYLKISEGCDNRCLYCVIPQLRGPYRSREASVLVREARALAARGAREIVLVAQDTTRYGSDLKERTSLTDLVSRLAALEGVAWIRLLYCYPSGITFELVELMAREPRLCRYLDIPLQHASDRVLRRMGRSTMSYDLRKLILFLRSAIPGLTIRSTFMVGFPGETEADFEELLGFLKAMKLDRAGFFAYSREEGTPAARMPDQVPPEVKRERLERAAAVQREVSRALNRARVGSEVTVLVEGRKGEQYYGRSEADAPDIDGRVFLSAASDLEPGTFVRARITGAGPYDLRARVLSTLP</sequence>
<dbReference type="EC" id="2.8.4.4" evidence="1"/>
<dbReference type="EMBL" id="CP000860">
    <property type="protein sequence ID" value="ACA59353.1"/>
    <property type="molecule type" value="Genomic_DNA"/>
</dbReference>
<dbReference type="RefSeq" id="WP_012301939.1">
    <property type="nucleotide sequence ID" value="NC_010424.1"/>
</dbReference>
<dbReference type="SMR" id="B1I310"/>
<dbReference type="STRING" id="477974.Daud_0839"/>
<dbReference type="KEGG" id="dau:Daud_0839"/>
<dbReference type="eggNOG" id="COG0621">
    <property type="taxonomic scope" value="Bacteria"/>
</dbReference>
<dbReference type="HOGENOM" id="CLU_018697_0_1_9"/>
<dbReference type="OrthoDB" id="9805215at2"/>
<dbReference type="Proteomes" id="UP000008544">
    <property type="component" value="Chromosome"/>
</dbReference>
<dbReference type="GO" id="GO:0005829">
    <property type="term" value="C:cytosol"/>
    <property type="evidence" value="ECO:0007669"/>
    <property type="project" value="TreeGrafter"/>
</dbReference>
<dbReference type="GO" id="GO:0051539">
    <property type="term" value="F:4 iron, 4 sulfur cluster binding"/>
    <property type="evidence" value="ECO:0007669"/>
    <property type="project" value="UniProtKB-UniRule"/>
</dbReference>
<dbReference type="GO" id="GO:0035599">
    <property type="term" value="F:aspartic acid methylthiotransferase activity"/>
    <property type="evidence" value="ECO:0007669"/>
    <property type="project" value="TreeGrafter"/>
</dbReference>
<dbReference type="GO" id="GO:0046872">
    <property type="term" value="F:metal ion binding"/>
    <property type="evidence" value="ECO:0007669"/>
    <property type="project" value="UniProtKB-KW"/>
</dbReference>
<dbReference type="GO" id="GO:0103039">
    <property type="term" value="F:protein methylthiotransferase activity"/>
    <property type="evidence" value="ECO:0007669"/>
    <property type="project" value="UniProtKB-EC"/>
</dbReference>
<dbReference type="GO" id="GO:0006400">
    <property type="term" value="P:tRNA modification"/>
    <property type="evidence" value="ECO:0007669"/>
    <property type="project" value="InterPro"/>
</dbReference>
<dbReference type="CDD" id="cd01335">
    <property type="entry name" value="Radical_SAM"/>
    <property type="match status" value="1"/>
</dbReference>
<dbReference type="FunFam" id="3.80.30.20:FF:000001">
    <property type="entry name" value="tRNA-2-methylthio-N(6)-dimethylallyladenosine synthase 2"/>
    <property type="match status" value="1"/>
</dbReference>
<dbReference type="Gene3D" id="3.40.50.12160">
    <property type="entry name" value="Methylthiotransferase, N-terminal domain"/>
    <property type="match status" value="1"/>
</dbReference>
<dbReference type="Gene3D" id="2.40.50.140">
    <property type="entry name" value="Nucleic acid-binding proteins"/>
    <property type="match status" value="1"/>
</dbReference>
<dbReference type="Gene3D" id="3.80.30.20">
    <property type="entry name" value="tm_1862 like domain"/>
    <property type="match status" value="1"/>
</dbReference>
<dbReference type="HAMAP" id="MF_01865">
    <property type="entry name" value="MTTase_RimO"/>
    <property type="match status" value="1"/>
</dbReference>
<dbReference type="InterPro" id="IPR006638">
    <property type="entry name" value="Elp3/MiaA/NifB-like_rSAM"/>
</dbReference>
<dbReference type="InterPro" id="IPR005839">
    <property type="entry name" value="Methylthiotransferase"/>
</dbReference>
<dbReference type="InterPro" id="IPR013848">
    <property type="entry name" value="Methylthiotransferase_N"/>
</dbReference>
<dbReference type="InterPro" id="IPR038135">
    <property type="entry name" value="Methylthiotransferase_N_sf"/>
</dbReference>
<dbReference type="InterPro" id="IPR012340">
    <property type="entry name" value="NA-bd_OB-fold"/>
</dbReference>
<dbReference type="InterPro" id="IPR005840">
    <property type="entry name" value="Ribosomal_uS12_MeSTrfase_RimO"/>
</dbReference>
<dbReference type="InterPro" id="IPR007197">
    <property type="entry name" value="rSAM"/>
</dbReference>
<dbReference type="InterPro" id="IPR023404">
    <property type="entry name" value="rSAM_horseshoe"/>
</dbReference>
<dbReference type="InterPro" id="IPR002792">
    <property type="entry name" value="TRAM_dom"/>
</dbReference>
<dbReference type="NCBIfam" id="TIGR01125">
    <property type="entry name" value="30S ribosomal protein S12 methylthiotransferase RimO"/>
    <property type="match status" value="1"/>
</dbReference>
<dbReference type="NCBIfam" id="TIGR00089">
    <property type="entry name" value="MiaB/RimO family radical SAM methylthiotransferase"/>
    <property type="match status" value="1"/>
</dbReference>
<dbReference type="PANTHER" id="PTHR43837">
    <property type="entry name" value="RIBOSOMAL PROTEIN S12 METHYLTHIOTRANSFERASE RIMO"/>
    <property type="match status" value="1"/>
</dbReference>
<dbReference type="PANTHER" id="PTHR43837:SF1">
    <property type="entry name" value="RIBOSOMAL PROTEIN US12 METHYLTHIOTRANSFERASE RIMO"/>
    <property type="match status" value="1"/>
</dbReference>
<dbReference type="Pfam" id="PF04055">
    <property type="entry name" value="Radical_SAM"/>
    <property type="match status" value="1"/>
</dbReference>
<dbReference type="Pfam" id="PF18693">
    <property type="entry name" value="TRAM_2"/>
    <property type="match status" value="1"/>
</dbReference>
<dbReference type="Pfam" id="PF00919">
    <property type="entry name" value="UPF0004"/>
    <property type="match status" value="1"/>
</dbReference>
<dbReference type="SFLD" id="SFLDG01082">
    <property type="entry name" value="B12-binding_domain_containing"/>
    <property type="match status" value="1"/>
</dbReference>
<dbReference type="SFLD" id="SFLDG01061">
    <property type="entry name" value="methylthiotransferase"/>
    <property type="match status" value="1"/>
</dbReference>
<dbReference type="SFLD" id="SFLDF00274">
    <property type="entry name" value="ribosomal_protein_S12_methylth"/>
    <property type="match status" value="1"/>
</dbReference>
<dbReference type="SMART" id="SM00729">
    <property type="entry name" value="Elp3"/>
    <property type="match status" value="1"/>
</dbReference>
<dbReference type="SUPFAM" id="SSF102114">
    <property type="entry name" value="Radical SAM enzymes"/>
    <property type="match status" value="1"/>
</dbReference>
<dbReference type="PROSITE" id="PS51449">
    <property type="entry name" value="MTTASE_N"/>
    <property type="match status" value="1"/>
</dbReference>
<dbReference type="PROSITE" id="PS51918">
    <property type="entry name" value="RADICAL_SAM"/>
    <property type="match status" value="1"/>
</dbReference>
<dbReference type="PROSITE" id="PS50926">
    <property type="entry name" value="TRAM"/>
    <property type="match status" value="1"/>
</dbReference>
<name>RIMO_DESAP</name>
<feature type="chain" id="PRO_0000374804" description="Ribosomal protein uS12 methylthiotransferase RimO">
    <location>
        <begin position="1"/>
        <end position="450"/>
    </location>
</feature>
<feature type="domain" description="MTTase N-terminal" evidence="1">
    <location>
        <begin position="10"/>
        <end position="125"/>
    </location>
</feature>
<feature type="domain" description="Radical SAM core" evidence="2">
    <location>
        <begin position="148"/>
        <end position="378"/>
    </location>
</feature>
<feature type="domain" description="TRAM" evidence="1">
    <location>
        <begin position="381"/>
        <end position="447"/>
    </location>
</feature>
<feature type="binding site" evidence="1">
    <location>
        <position position="19"/>
    </location>
    <ligand>
        <name>[4Fe-4S] cluster</name>
        <dbReference type="ChEBI" id="CHEBI:49883"/>
        <label>1</label>
    </ligand>
</feature>
<feature type="binding site" evidence="1">
    <location>
        <position position="54"/>
    </location>
    <ligand>
        <name>[4Fe-4S] cluster</name>
        <dbReference type="ChEBI" id="CHEBI:49883"/>
        <label>1</label>
    </ligand>
</feature>
<feature type="binding site" evidence="1">
    <location>
        <position position="88"/>
    </location>
    <ligand>
        <name>[4Fe-4S] cluster</name>
        <dbReference type="ChEBI" id="CHEBI:49883"/>
        <label>1</label>
    </ligand>
</feature>
<feature type="binding site" evidence="1">
    <location>
        <position position="162"/>
    </location>
    <ligand>
        <name>[4Fe-4S] cluster</name>
        <dbReference type="ChEBI" id="CHEBI:49883"/>
        <label>2</label>
        <note>4Fe-4S-S-AdoMet</note>
    </ligand>
</feature>
<feature type="binding site" evidence="1">
    <location>
        <position position="166"/>
    </location>
    <ligand>
        <name>[4Fe-4S] cluster</name>
        <dbReference type="ChEBI" id="CHEBI:49883"/>
        <label>2</label>
        <note>4Fe-4S-S-AdoMet</note>
    </ligand>
</feature>
<feature type="binding site" evidence="1">
    <location>
        <position position="169"/>
    </location>
    <ligand>
        <name>[4Fe-4S] cluster</name>
        <dbReference type="ChEBI" id="CHEBI:49883"/>
        <label>2</label>
        <note>4Fe-4S-S-AdoMet</note>
    </ligand>
</feature>
<accession>B1I310</accession>
<organism>
    <name type="scientific">Desulforudis audaxviator (strain MP104C)</name>
    <dbReference type="NCBI Taxonomy" id="477974"/>
    <lineage>
        <taxon>Bacteria</taxon>
        <taxon>Bacillati</taxon>
        <taxon>Bacillota</taxon>
        <taxon>Clostridia</taxon>
        <taxon>Thermoanaerobacterales</taxon>
        <taxon>Candidatus Desulforudaceae</taxon>
        <taxon>Candidatus Desulforudis</taxon>
    </lineage>
</organism>
<keyword id="KW-0004">4Fe-4S</keyword>
<keyword id="KW-0963">Cytoplasm</keyword>
<keyword id="KW-0408">Iron</keyword>
<keyword id="KW-0411">Iron-sulfur</keyword>
<keyword id="KW-0479">Metal-binding</keyword>
<keyword id="KW-1185">Reference proteome</keyword>
<keyword id="KW-0949">S-adenosyl-L-methionine</keyword>
<keyword id="KW-0808">Transferase</keyword>
<proteinExistence type="inferred from homology"/>
<reference key="1">
    <citation type="submission" date="2007-10" db="EMBL/GenBank/DDBJ databases">
        <title>Complete sequence of chromosome of Desulforudis audaxviator MP104C.</title>
        <authorList>
            <person name="Copeland A."/>
            <person name="Lucas S."/>
            <person name="Lapidus A."/>
            <person name="Barry K."/>
            <person name="Glavina del Rio T."/>
            <person name="Dalin E."/>
            <person name="Tice H."/>
            <person name="Bruce D."/>
            <person name="Pitluck S."/>
            <person name="Lowry S.R."/>
            <person name="Larimer F."/>
            <person name="Land M.L."/>
            <person name="Hauser L."/>
            <person name="Kyrpides N."/>
            <person name="Ivanova N.N."/>
            <person name="Richardson P."/>
        </authorList>
    </citation>
    <scope>NUCLEOTIDE SEQUENCE [LARGE SCALE GENOMIC DNA]</scope>
    <source>
        <strain>MP104C</strain>
    </source>
</reference>